<gene>
    <name type="primary">nuc</name>
    <name type="ordered locus">MW0769</name>
</gene>
<protein>
    <recommendedName>
        <fullName>Thermonuclease</fullName>
        <shortName>TNase</shortName>
        <ecNumber>3.1.31.1</ecNumber>
    </recommendedName>
    <alternativeName>
        <fullName>Micrococcal nuclease</fullName>
    </alternativeName>
    <alternativeName>
        <fullName>Staphylococcal nuclease</fullName>
    </alternativeName>
</protein>
<organism>
    <name type="scientific">Staphylococcus aureus (strain MW2)</name>
    <dbReference type="NCBI Taxonomy" id="196620"/>
    <lineage>
        <taxon>Bacteria</taxon>
        <taxon>Bacillati</taxon>
        <taxon>Bacillota</taxon>
        <taxon>Bacilli</taxon>
        <taxon>Bacillales</taxon>
        <taxon>Staphylococcaceae</taxon>
        <taxon>Staphylococcus</taxon>
    </lineage>
</organism>
<feature type="signal peptide" evidence="2">
    <location>
        <begin position="1"/>
        <end position="23"/>
    </location>
</feature>
<feature type="propeptide" id="PRO_0000045237" evidence="1">
    <location>
        <begin position="24"/>
        <end position="60"/>
    </location>
</feature>
<feature type="chain" id="PRO_0000045238" description="Thermonuclease">
    <location>
        <begin position="61"/>
        <end position="228"/>
    </location>
</feature>
<feature type="active site" evidence="1">
    <location>
        <position position="114"/>
    </location>
</feature>
<feature type="active site" evidence="1">
    <location>
        <position position="122"/>
    </location>
</feature>
<feature type="active site" evidence="1">
    <location>
        <position position="166"/>
    </location>
</feature>
<feature type="binding site" evidence="3">
    <location>
        <position position="100"/>
    </location>
    <ligand>
        <name>Ca(2+)</name>
        <dbReference type="ChEBI" id="CHEBI:29108"/>
    </ligand>
</feature>
<feature type="binding site" evidence="3">
    <location>
        <position position="119"/>
    </location>
    <ligand>
        <name>Ca(2+)</name>
        <dbReference type="ChEBI" id="CHEBI:29108"/>
    </ligand>
</feature>
<feature type="binding site" evidence="3">
    <location>
        <position position="120"/>
    </location>
    <ligand>
        <name>Ca(2+)</name>
        <dbReference type="ChEBI" id="CHEBI:29108"/>
    </ligand>
</feature>
<feature type="strand" evidence="9">
    <location>
        <begin position="88"/>
        <end position="96"/>
    </location>
</feature>
<feature type="strand" evidence="9">
    <location>
        <begin position="98"/>
        <end position="106"/>
    </location>
</feature>
<feature type="strand" evidence="9">
    <location>
        <begin position="109"/>
        <end position="115"/>
    </location>
</feature>
<feature type="strand" evidence="7">
    <location>
        <begin position="116"/>
        <end position="119"/>
    </location>
</feature>
<feature type="strand" evidence="6">
    <location>
        <begin position="125"/>
        <end position="131"/>
    </location>
</feature>
<feature type="helix" evidence="9">
    <location>
        <begin position="134"/>
        <end position="146"/>
    </location>
</feature>
<feature type="strand" evidence="9">
    <location>
        <begin position="151"/>
        <end position="154"/>
    </location>
</feature>
<feature type="strand" evidence="6">
    <location>
        <begin position="160"/>
        <end position="162"/>
    </location>
</feature>
<feature type="turn" evidence="6">
    <location>
        <begin position="163"/>
        <end position="165"/>
    </location>
</feature>
<feature type="strand" evidence="9">
    <location>
        <begin position="167"/>
        <end position="173"/>
    </location>
</feature>
<feature type="helix" evidence="9">
    <location>
        <begin position="178"/>
        <end position="184"/>
    </location>
</feature>
<feature type="strand" evidence="9">
    <location>
        <begin position="187"/>
        <end position="190"/>
    </location>
</feature>
<feature type="helix" evidence="8">
    <location>
        <begin position="195"/>
        <end position="197"/>
    </location>
</feature>
<feature type="helix" evidence="9">
    <location>
        <begin position="201"/>
        <end position="213"/>
    </location>
</feature>
<feature type="helix" evidence="9">
    <location>
        <begin position="217"/>
        <end position="219"/>
    </location>
</feature>
<feature type="turn" evidence="7">
    <location>
        <begin position="221"/>
        <end position="223"/>
    </location>
</feature>
<keyword id="KW-0002">3D-structure</keyword>
<keyword id="KW-0106">Calcium</keyword>
<keyword id="KW-0255">Endonuclease</keyword>
<keyword id="KW-0378">Hydrolase</keyword>
<keyword id="KW-0479">Metal-binding</keyword>
<keyword id="KW-0540">Nuclease</keyword>
<keyword id="KW-0964">Secreted</keyword>
<keyword id="KW-0732">Signal</keyword>
<keyword id="KW-0865">Zymogen</keyword>
<comment type="function">
    <text evidence="1">Enzyme that catalyzes the hydrolysis of both DNA and RNA at the 5' position of the phosphodiester bond.</text>
</comment>
<comment type="catalytic activity">
    <reaction evidence="4 5">
        <text>Endonucleolytic cleavage to nucleoside 3'-phosphates and 3'-phosphooligonucleotide end-products.</text>
        <dbReference type="EC" id="3.1.31.1"/>
    </reaction>
</comment>
<comment type="cofactor">
    <cofactor evidence="1">
        <name>Ca(2+)</name>
        <dbReference type="ChEBI" id="CHEBI:29108"/>
    </cofactor>
    <text evidence="1">Binds 1 Ca(2+) ion per subunit.</text>
</comment>
<comment type="subcellular location">
    <subcellularLocation>
        <location evidence="1">Secreted</location>
    </subcellularLocation>
</comment>
<comment type="similarity">
    <text evidence="3">Belongs to the thermonuclease family.</text>
</comment>
<name>NUC_STAAW</name>
<evidence type="ECO:0000250" key="1"/>
<evidence type="ECO:0000255" key="2"/>
<evidence type="ECO:0000255" key="3">
    <source>
        <dbReference type="PROSITE-ProRule" id="PRU00272"/>
    </source>
</evidence>
<evidence type="ECO:0000255" key="4">
    <source>
        <dbReference type="PROSITE-ProRule" id="PRU10048"/>
    </source>
</evidence>
<evidence type="ECO:0000255" key="5">
    <source>
        <dbReference type="PROSITE-ProRule" id="PRU10049"/>
    </source>
</evidence>
<evidence type="ECO:0007829" key="6">
    <source>
        <dbReference type="PDB" id="2LKV"/>
    </source>
</evidence>
<evidence type="ECO:0007829" key="7">
    <source>
        <dbReference type="PDB" id="2M00"/>
    </source>
</evidence>
<evidence type="ECO:0007829" key="8">
    <source>
        <dbReference type="PDB" id="3D8G"/>
    </source>
</evidence>
<evidence type="ECO:0007829" key="9">
    <source>
        <dbReference type="PDB" id="3QOJ"/>
    </source>
</evidence>
<accession>Q8NXI6</accession>
<reference key="1">
    <citation type="journal article" date="2002" name="Lancet">
        <title>Genome and virulence determinants of high virulence community-acquired MRSA.</title>
        <authorList>
            <person name="Baba T."/>
            <person name="Takeuchi F."/>
            <person name="Kuroda M."/>
            <person name="Yuzawa H."/>
            <person name="Aoki K."/>
            <person name="Oguchi A."/>
            <person name="Nagai Y."/>
            <person name="Iwama N."/>
            <person name="Asano K."/>
            <person name="Naimi T."/>
            <person name="Kuroda H."/>
            <person name="Cui L."/>
            <person name="Yamamoto K."/>
            <person name="Hiramatsu K."/>
        </authorList>
    </citation>
    <scope>NUCLEOTIDE SEQUENCE [LARGE SCALE GENOMIC DNA]</scope>
    <source>
        <strain>MW2</strain>
    </source>
</reference>
<dbReference type="EC" id="3.1.31.1"/>
<dbReference type="EMBL" id="BA000033">
    <property type="protein sequence ID" value="BAB94634.1"/>
    <property type="molecule type" value="Genomic_DNA"/>
</dbReference>
<dbReference type="RefSeq" id="WP_001793574.1">
    <property type="nucleotide sequence ID" value="NC_003923.1"/>
</dbReference>
<dbReference type="PDB" id="2LKV">
    <property type="method" value="NMR"/>
    <property type="chains" value="A=80-228"/>
</dbReference>
<dbReference type="PDB" id="2M00">
    <property type="method" value="NMR"/>
    <property type="chains" value="A=80-228"/>
</dbReference>
<dbReference type="PDB" id="2OXP">
    <property type="method" value="X-ray"/>
    <property type="resolution" value="2.00 A"/>
    <property type="chains" value="A=80-228"/>
</dbReference>
<dbReference type="PDB" id="2PW5">
    <property type="method" value="X-ray"/>
    <property type="resolution" value="2.10 A"/>
    <property type="chains" value="A=80-228"/>
</dbReference>
<dbReference type="PDB" id="2PW7">
    <property type="method" value="X-ray"/>
    <property type="resolution" value="2.10 A"/>
    <property type="chains" value="A=80-228"/>
</dbReference>
<dbReference type="PDB" id="2PYK">
    <property type="method" value="X-ray"/>
    <property type="resolution" value="2.10 A"/>
    <property type="chains" value="A=80-228"/>
</dbReference>
<dbReference type="PDB" id="2PZT">
    <property type="method" value="X-ray"/>
    <property type="resolution" value="2.10 A"/>
    <property type="chains" value="A=80-228"/>
</dbReference>
<dbReference type="PDB" id="2PZU">
    <property type="method" value="X-ray"/>
    <property type="resolution" value="2.10 A"/>
    <property type="chains" value="A=80-228"/>
</dbReference>
<dbReference type="PDB" id="2PZW">
    <property type="method" value="X-ray"/>
    <property type="resolution" value="2.10 A"/>
    <property type="chains" value="A=80-228"/>
</dbReference>
<dbReference type="PDB" id="3D4W">
    <property type="method" value="X-ray"/>
    <property type="resolution" value="1.90 A"/>
    <property type="chains" value="A=80-228"/>
</dbReference>
<dbReference type="PDB" id="3D8G">
    <property type="method" value="X-ray"/>
    <property type="resolution" value="1.99 A"/>
    <property type="chains" value="A=80-228"/>
</dbReference>
<dbReference type="PDB" id="3MVV">
    <property type="method" value="X-ray"/>
    <property type="resolution" value="1.72 A"/>
    <property type="chains" value="A=80-228"/>
</dbReference>
<dbReference type="PDB" id="3QOJ">
    <property type="method" value="X-ray"/>
    <property type="resolution" value="1.60 A"/>
    <property type="chains" value="A=80-228"/>
</dbReference>
<dbReference type="PDB" id="3QOL">
    <property type="method" value="X-ray"/>
    <property type="resolution" value="1.90 A"/>
    <property type="chains" value="A=80-228"/>
</dbReference>
<dbReference type="PDB" id="3R3O">
    <property type="method" value="X-ray"/>
    <property type="resolution" value="1.90 A"/>
    <property type="chains" value="A=80-228"/>
</dbReference>
<dbReference type="PDB" id="6AMF">
    <property type="method" value="X-ray"/>
    <property type="resolution" value="1.85 A"/>
    <property type="chains" value="A=80-228"/>
</dbReference>
<dbReference type="PDBsum" id="2LKV"/>
<dbReference type="PDBsum" id="2M00"/>
<dbReference type="PDBsum" id="2OXP"/>
<dbReference type="PDBsum" id="2PW5"/>
<dbReference type="PDBsum" id="2PW7"/>
<dbReference type="PDBsum" id="2PYK"/>
<dbReference type="PDBsum" id="2PZT"/>
<dbReference type="PDBsum" id="2PZU"/>
<dbReference type="PDBsum" id="2PZW"/>
<dbReference type="PDBsum" id="3D4W"/>
<dbReference type="PDBsum" id="3D8G"/>
<dbReference type="PDBsum" id="3MVV"/>
<dbReference type="PDBsum" id="3QOJ"/>
<dbReference type="PDBsum" id="3QOL"/>
<dbReference type="PDBsum" id="3R3O"/>
<dbReference type="PDBsum" id="6AMF"/>
<dbReference type="BMRB" id="Q8NXI6"/>
<dbReference type="SMR" id="Q8NXI6"/>
<dbReference type="KEGG" id="sam:MW0769"/>
<dbReference type="HOGENOM" id="CLU_046484_5_2_9"/>
<dbReference type="EvolutionaryTrace" id="Q8NXI6"/>
<dbReference type="GO" id="GO:0005576">
    <property type="term" value="C:extracellular region"/>
    <property type="evidence" value="ECO:0007669"/>
    <property type="project" value="UniProtKB-SubCell"/>
</dbReference>
<dbReference type="GO" id="GO:0016894">
    <property type="term" value="F:endonuclease activity, active with either ribo- or deoxyribonucleic acids and producing 3'-phosphomonoesters"/>
    <property type="evidence" value="ECO:0007669"/>
    <property type="project" value="UniProtKB-EC"/>
</dbReference>
<dbReference type="GO" id="GO:0046872">
    <property type="term" value="F:metal ion binding"/>
    <property type="evidence" value="ECO:0007669"/>
    <property type="project" value="UniProtKB-KW"/>
</dbReference>
<dbReference type="GO" id="GO:0003676">
    <property type="term" value="F:nucleic acid binding"/>
    <property type="evidence" value="ECO:0007669"/>
    <property type="project" value="InterPro"/>
</dbReference>
<dbReference type="CDD" id="cd00175">
    <property type="entry name" value="SNc"/>
    <property type="match status" value="1"/>
</dbReference>
<dbReference type="FunFam" id="2.40.50.90:FF:000025">
    <property type="entry name" value="Thermonuclease"/>
    <property type="match status" value="1"/>
</dbReference>
<dbReference type="Gene3D" id="2.40.50.90">
    <property type="match status" value="1"/>
</dbReference>
<dbReference type="InterPro" id="IPR035437">
    <property type="entry name" value="SNase_OB-fold_sf"/>
</dbReference>
<dbReference type="InterPro" id="IPR016071">
    <property type="entry name" value="Staphylococal_nuclease_OB-fold"/>
</dbReference>
<dbReference type="InterPro" id="IPR002071">
    <property type="entry name" value="Thermonucl_AS"/>
</dbReference>
<dbReference type="PANTHER" id="PTHR12302">
    <property type="entry name" value="EBNA2 BINDING PROTEIN P100"/>
    <property type="match status" value="1"/>
</dbReference>
<dbReference type="PANTHER" id="PTHR12302:SF3">
    <property type="entry name" value="SERINE_THREONINE-PROTEIN KINASE 31"/>
    <property type="match status" value="1"/>
</dbReference>
<dbReference type="Pfam" id="PF00565">
    <property type="entry name" value="SNase"/>
    <property type="match status" value="1"/>
</dbReference>
<dbReference type="SMART" id="SM00318">
    <property type="entry name" value="SNc"/>
    <property type="match status" value="1"/>
</dbReference>
<dbReference type="SUPFAM" id="SSF50199">
    <property type="entry name" value="Staphylococcal nuclease"/>
    <property type="match status" value="1"/>
</dbReference>
<dbReference type="PROSITE" id="PS01123">
    <property type="entry name" value="TNASE_1"/>
    <property type="match status" value="1"/>
</dbReference>
<dbReference type="PROSITE" id="PS01284">
    <property type="entry name" value="TNASE_2"/>
    <property type="match status" value="1"/>
</dbReference>
<dbReference type="PROSITE" id="PS50830">
    <property type="entry name" value="TNASE_3"/>
    <property type="match status" value="1"/>
</dbReference>
<sequence>MTEYLLSAGICMAIVSILLIGMAISNVSKGQYAKRFFFFATSCLVLTLVVVSSLSSSANASQTDNGVNRSGSEHPTVYSATSTKKLHKEPATLIKAIDGDTVKLMYKGQPMTFRLLLVDTPETKHPKKGVEKYGPEASAFTKKMVENAKKIEVEFDKGQRTDKYGRGLAYIYADGKMVNEALVRQGLAKVAYVYKPNNTHEQLLRKSEAQAKKEKLNIWSEDNADSGQ</sequence>
<proteinExistence type="evidence at protein level"/>